<comment type="function">
    <text evidence="6 8 9 10 12 13 16 17 18">Participates in ABA-regulated gene expression during seed development and subsequent vegetative stage by acting as the major mediator of ABA repression of growth. Binds to the embryo specification element and the ABA-responsive element (ABRE) of the Dc3 gene promoter and to the ABRE of the Em1 and Em6 genes promoters. Can also trans-activate its own promoter, suggesting that it is autoregulated. Plays a role in sugar-mediated senescence.</text>
</comment>
<comment type="subunit">
    <text evidence="7 14 17 19 22 24 25 26 27">DNA-binding homodimer. DNA-binding heterodimer with AREB3/DPBF3 or EEL/DPBF4. Interacts with ABI3, KEG, the mediator subunit MED25, and the AFP proteins AFP1, AFP2, AFP3 and AFP4. Interacts with TAP46. Interacts with the 36 kDa catalytic subunit (subunit C) of PP2A (PubMed:11489176, PubMed:12569131, PubMed:16247556, PubMed:17194765, PubMed:18484180, PubMed:22822206, PubMed:24357600). Interacts with FYPP1 and FYPP3 (PubMed:22715043). Interacts with FREE1 (via C-terminus) (PubMed:30962512).</text>
</comment>
<comment type="interaction">
    <interactant intactId="EBI-1778690">
        <id>Q9SJN0</id>
    </interactant>
    <interactant intactId="EBI-3946710">
        <id>Q9M1R4</id>
        <label>IAA30</label>
    </interactant>
    <organismsDiffer>false</organismsDiffer>
    <experiments>3</experiments>
</comment>
<comment type="interaction">
    <interactant intactId="EBI-1778690">
        <id>Q9SJN0</id>
    </interactant>
    <interactant intactId="EBI-1955729">
        <id>Q9FY48</id>
        <label>KEG</label>
    </interactant>
    <organismsDiffer>false</organismsDiffer>
    <experiments>2</experiments>
</comment>
<comment type="interaction">
    <interactant intactId="EBI-1778690">
        <id>Q9SJN0</id>
    </interactant>
    <interactant intactId="EBI-401164">
        <id>P43291</id>
        <label>SRK2A</label>
    </interactant>
    <organismsDiffer>false</organismsDiffer>
    <experiments>3</experiments>
</comment>
<comment type="interaction">
    <interactant intactId="EBI-1778690">
        <id>Q9SJN0</id>
    </interactant>
    <interactant intactId="EBI-15763381">
        <id>P55852</id>
        <label>SUMO1</label>
    </interactant>
    <organismsDiffer>false</organismsDiffer>
    <experiments>2</experiments>
</comment>
<comment type="subcellular location">
    <subcellularLocation>
        <location evidence="2 12">Nucleus</location>
    </subcellularLocation>
</comment>
<comment type="tissue specificity">
    <text evidence="4 11">Predominantly expressed in seeds.</text>
</comment>
<comment type="developmental stage">
    <text evidence="9">Expressed in embryo during the latest stages of seed maturation.</text>
</comment>
<comment type="induction">
    <text evidence="6 10 11 15 18 21">Up-regulated by drought, salt, abscisic acid (ABA) and glucose or 2-deoxy-glucose (2DG). Autoregulated. Positively regulated by the light-signaling component HY5.</text>
</comment>
<comment type="PTM">
    <text evidence="20">Phosphorylated by SRK2D and SRK2I in vitro.</text>
</comment>
<comment type="PTM">
    <text evidence="23">Ubiquitinated. AFP1, KEG and RPN10 mediate its proteasome-dependent degradation. Its stability or degradation plays a central role in abscisic acid response. Sumoylated at Lys-391 by SIZ1. Sumoylation protects ABI5 from proteasome degradation, attenuating ABA signaling and sensitivity to ABA.</text>
</comment>
<comment type="disruption phenotype">
    <text evidence="5">Exhibits abscisic acid (ABA) insensitivity.</text>
</comment>
<comment type="similarity">
    <text evidence="28">Belongs to the bZIP family. ABI5 subfamily.</text>
</comment>
<evidence type="ECO:0000250" key="1">
    <source>
        <dbReference type="UniProtKB" id="Q9LES3"/>
    </source>
</evidence>
<evidence type="ECO:0000255" key="2">
    <source>
        <dbReference type="PROSITE-ProRule" id="PRU00978"/>
    </source>
</evidence>
<evidence type="ECO:0000256" key="3">
    <source>
        <dbReference type="SAM" id="MobiDB-lite"/>
    </source>
</evidence>
<evidence type="ECO:0000269" key="4">
    <source>
    </source>
</evidence>
<evidence type="ECO:0000269" key="5">
    <source>
    </source>
</evidence>
<evidence type="ECO:0000269" key="6">
    <source>
    </source>
</evidence>
<evidence type="ECO:0000269" key="7">
    <source>
    </source>
</evidence>
<evidence type="ECO:0000269" key="8">
    <source>
    </source>
</evidence>
<evidence type="ECO:0000269" key="9">
    <source>
    </source>
</evidence>
<evidence type="ECO:0000269" key="10">
    <source>
    </source>
</evidence>
<evidence type="ECO:0000269" key="11">
    <source>
    </source>
</evidence>
<evidence type="ECO:0000269" key="12">
    <source>
    </source>
</evidence>
<evidence type="ECO:0000269" key="13">
    <source>
    </source>
</evidence>
<evidence type="ECO:0000269" key="14">
    <source>
    </source>
</evidence>
<evidence type="ECO:0000269" key="15">
    <source>
    </source>
</evidence>
<evidence type="ECO:0000269" key="16">
    <source>
    </source>
</evidence>
<evidence type="ECO:0000269" key="17">
    <source>
    </source>
</evidence>
<evidence type="ECO:0000269" key="18">
    <source>
    </source>
</evidence>
<evidence type="ECO:0000269" key="19">
    <source>
    </source>
</evidence>
<evidence type="ECO:0000269" key="20">
    <source>
    </source>
</evidence>
<evidence type="ECO:0000269" key="21">
    <source>
    </source>
</evidence>
<evidence type="ECO:0000269" key="22">
    <source>
    </source>
</evidence>
<evidence type="ECO:0000269" key="23">
    <source>
    </source>
</evidence>
<evidence type="ECO:0000269" key="24">
    <source>
    </source>
</evidence>
<evidence type="ECO:0000269" key="25">
    <source>
    </source>
</evidence>
<evidence type="ECO:0000269" key="26">
    <source>
    </source>
</evidence>
<evidence type="ECO:0000269" key="27">
    <source>
    </source>
</evidence>
<evidence type="ECO:0000305" key="28"/>
<evidence type="ECO:0000305" key="29">
    <source>
    </source>
</evidence>
<feature type="chain" id="PRO_0000369605" description="Protein ABSCISIC ACID-INSENSITIVE 5">
    <location>
        <begin position="1"/>
        <end position="442"/>
    </location>
</feature>
<feature type="domain" description="bZIP" evidence="2">
    <location>
        <begin position="355"/>
        <end position="418"/>
    </location>
</feature>
<feature type="region of interest" description="Disordered" evidence="3">
    <location>
        <begin position="1"/>
        <end position="37"/>
    </location>
</feature>
<feature type="region of interest" description="Disordered" evidence="3">
    <location>
        <begin position="83"/>
        <end position="151"/>
    </location>
</feature>
<feature type="region of interest" description="Disordered" evidence="3">
    <location>
        <begin position="164"/>
        <end position="201"/>
    </location>
</feature>
<feature type="region of interest" description="Disordered" evidence="3">
    <location>
        <begin position="218"/>
        <end position="238"/>
    </location>
</feature>
<feature type="region of interest" description="Basic motif" evidence="2">
    <location>
        <begin position="357"/>
        <end position="376"/>
    </location>
</feature>
<feature type="region of interest" description="Leucine-zipper" evidence="2">
    <location>
        <begin position="383"/>
        <end position="404"/>
    </location>
</feature>
<feature type="region of interest" description="Disordered" evidence="3">
    <location>
        <begin position="414"/>
        <end position="442"/>
    </location>
</feature>
<feature type="compositionally biased region" description="Basic and acidic residues" evidence="3">
    <location>
        <begin position="1"/>
        <end position="15"/>
    </location>
</feature>
<feature type="compositionally biased region" description="Low complexity" evidence="3">
    <location>
        <begin position="99"/>
        <end position="109"/>
    </location>
</feature>
<feature type="compositionally biased region" description="Gly residues" evidence="3">
    <location>
        <begin position="110"/>
        <end position="123"/>
    </location>
</feature>
<feature type="compositionally biased region" description="Polar residues" evidence="3">
    <location>
        <begin position="136"/>
        <end position="146"/>
    </location>
</feature>
<feature type="compositionally biased region" description="Gly residues" evidence="3">
    <location>
        <begin position="167"/>
        <end position="176"/>
    </location>
</feature>
<feature type="compositionally biased region" description="Low complexity" evidence="3">
    <location>
        <begin position="177"/>
        <end position="193"/>
    </location>
</feature>
<feature type="modified residue" description="Phosphoserine" evidence="29">
    <location>
        <position position="42"/>
    </location>
</feature>
<feature type="modified residue" description="Phosphoserine" evidence="1">
    <location>
        <position position="64"/>
    </location>
</feature>
<feature type="modified residue" description="Phosphoserine" evidence="29">
    <location>
        <position position="145"/>
    </location>
</feature>
<feature type="modified residue" description="Phosphothreonine" evidence="29">
    <location>
        <position position="201"/>
    </location>
</feature>
<feature type="cross-link" description="Glycyl lysine isopeptide (Lys-Gly) (interchain with G-Cter in SUMO)" evidence="23">
    <location>
        <position position="391"/>
    </location>
</feature>
<feature type="mutagenesis site" description="Loss of sumoylation." evidence="23">
    <original>K</original>
    <variation>R</variation>
    <location>
        <position position="391"/>
    </location>
</feature>
<keyword id="KW-0938">Abscisic acid signaling pathway</keyword>
<keyword id="KW-0010">Activator</keyword>
<keyword id="KW-0238">DNA-binding</keyword>
<keyword id="KW-1017">Isopeptide bond</keyword>
<keyword id="KW-0539">Nucleus</keyword>
<keyword id="KW-0597">Phosphoprotein</keyword>
<keyword id="KW-1185">Reference proteome</keyword>
<keyword id="KW-0804">Transcription</keyword>
<keyword id="KW-0805">Transcription regulation</keyword>
<keyword id="KW-0832">Ubl conjugation</keyword>
<organism>
    <name type="scientific">Arabidopsis thaliana</name>
    <name type="common">Mouse-ear cress</name>
    <dbReference type="NCBI Taxonomy" id="3702"/>
    <lineage>
        <taxon>Eukaryota</taxon>
        <taxon>Viridiplantae</taxon>
        <taxon>Streptophyta</taxon>
        <taxon>Embryophyta</taxon>
        <taxon>Tracheophyta</taxon>
        <taxon>Spermatophyta</taxon>
        <taxon>Magnoliopsida</taxon>
        <taxon>eudicotyledons</taxon>
        <taxon>Gunneridae</taxon>
        <taxon>Pentapetalae</taxon>
        <taxon>rosids</taxon>
        <taxon>malvids</taxon>
        <taxon>Brassicales</taxon>
        <taxon>Brassicaceae</taxon>
        <taxon>Camelineae</taxon>
        <taxon>Arabidopsis</taxon>
    </lineage>
</organism>
<accession>Q9SJN0</accession>
<proteinExistence type="evidence at protein level"/>
<gene>
    <name type="primary">ABI5</name>
    <name type="synonym">BZIP39</name>
    <name type="synonym">DPBF1</name>
    <name type="synonym">GIA1</name>
    <name type="synonym">NEM1</name>
    <name type="ordered locus">At2g36270</name>
    <name type="ORF">F2H17.12</name>
</gene>
<reference key="1">
    <citation type="journal article" date="2000" name="Plant Cell">
        <title>The Arabidopsis abscisic acid response gene ABI5 encodes a basic leucine zipper transcription factor.</title>
        <authorList>
            <person name="Finkelstein R.R."/>
            <person name="Lynch T.J."/>
        </authorList>
    </citation>
    <scope>NUCLEOTIDE SEQUENCE [GENOMIC DNA]</scope>
    <scope>TISSUE SPECIFICITY</scope>
</reference>
<reference key="2">
    <citation type="journal article" date="2002" name="Plant Physiol.">
        <title>Arabidopsis ABI5 subfamily members have distinct DNA-binding and transcriptional activities.</title>
        <authorList>
            <person name="Kim S.Y."/>
            <person name="Ma J."/>
            <person name="Perret P."/>
            <person name="Li Z."/>
            <person name="Thomas T.L."/>
        </authorList>
    </citation>
    <scope>NUCLEOTIDE SEQUENCE [MRNA]</scope>
    <scope>INDUCTION</scope>
    <scope>TISSUE SPECIFICITY</scope>
    <scope>DNA-BINDING</scope>
    <scope>HETERODIMERIZATION</scope>
</reference>
<reference key="3">
    <citation type="journal article" date="1999" name="Nature">
        <title>Sequence and analysis of chromosome 2 of the plant Arabidopsis thaliana.</title>
        <authorList>
            <person name="Lin X."/>
            <person name="Kaul S."/>
            <person name="Rounsley S.D."/>
            <person name="Shea T.P."/>
            <person name="Benito M.-I."/>
            <person name="Town C.D."/>
            <person name="Fujii C.Y."/>
            <person name="Mason T.M."/>
            <person name="Bowman C.L."/>
            <person name="Barnstead M.E."/>
            <person name="Feldblyum T.V."/>
            <person name="Buell C.R."/>
            <person name="Ketchum K.A."/>
            <person name="Lee J.J."/>
            <person name="Ronning C.M."/>
            <person name="Koo H.L."/>
            <person name="Moffat K.S."/>
            <person name="Cronin L.A."/>
            <person name="Shen M."/>
            <person name="Pai G."/>
            <person name="Van Aken S."/>
            <person name="Umayam L."/>
            <person name="Tallon L.J."/>
            <person name="Gill J.E."/>
            <person name="Adams M.D."/>
            <person name="Carrera A.J."/>
            <person name="Creasy T.H."/>
            <person name="Goodman H.M."/>
            <person name="Somerville C.R."/>
            <person name="Copenhaver G.P."/>
            <person name="Preuss D."/>
            <person name="Nierman W.C."/>
            <person name="White O."/>
            <person name="Eisen J.A."/>
            <person name="Salzberg S.L."/>
            <person name="Fraser C.M."/>
            <person name="Venter J.C."/>
        </authorList>
    </citation>
    <scope>NUCLEOTIDE SEQUENCE [LARGE SCALE GENOMIC DNA]</scope>
    <source>
        <strain>cv. Columbia</strain>
    </source>
</reference>
<reference key="4">
    <citation type="journal article" date="2017" name="Plant J.">
        <title>Araport11: a complete reannotation of the Arabidopsis thaliana reference genome.</title>
        <authorList>
            <person name="Cheng C.Y."/>
            <person name="Krishnakumar V."/>
            <person name="Chan A.P."/>
            <person name="Thibaud-Nissen F."/>
            <person name="Schobel S."/>
            <person name="Town C.D."/>
        </authorList>
    </citation>
    <scope>GENOME REANNOTATION</scope>
    <source>
        <strain>cv. Columbia</strain>
    </source>
</reference>
<reference key="5">
    <citation type="submission" date="2006-08" db="EMBL/GenBank/DDBJ databases">
        <title>Arabidopsis ORF Clones.</title>
        <authorList>
            <person name="Quinitio C."/>
            <person name="Chen H."/>
            <person name="Kim C.J."/>
            <person name="Shinn P."/>
            <person name="Ecker J.R."/>
        </authorList>
    </citation>
    <scope>NUCLEOTIDE SEQUENCE [LARGE SCALE MRNA]</scope>
    <source>
        <strain>cv. Columbia</strain>
    </source>
</reference>
<reference key="6">
    <citation type="journal article" date="2000" name="Plant Cell Physiol.">
        <title>A null mutation in a bZIP factor confers ABA-insensitivity in Arabidopsis thaliana.</title>
        <authorList>
            <person name="Lopez-Molina L."/>
            <person name="Chua N.H."/>
        </authorList>
    </citation>
    <scope>DISRUPTION PHENOTYPE</scope>
</reference>
<reference key="7">
    <citation type="journal article" date="2001" name="Plant J.">
        <title>Physical interactions between ABA response loci of Arabidopsis.</title>
        <authorList>
            <person name="Nakamura S."/>
            <person name="Lynch T.J."/>
            <person name="Finkelstein R.R."/>
        </authorList>
    </citation>
    <scope>INTERACTION WITH ABI3</scope>
    <scope>HOMODIMERIZATION</scope>
</reference>
<reference key="8">
    <citation type="journal article" date="2001" name="Proc. Natl. Acad. Sci. U.S.A.">
        <title>A postgermination developmental arrest checkpoint is mediated by abscisic acid and requires the ABI5 transcription factor in Arabidopsis.</title>
        <authorList>
            <person name="Lopez-Molina L."/>
            <person name="Mongrand S."/>
            <person name="Chua N.-H."/>
        </authorList>
    </citation>
    <scope>FUNCTION</scope>
    <scope>INDUCTION</scope>
</reference>
<reference key="9">
    <citation type="journal article" date="2002" name="Plant Cell">
        <title>The homologous ABI5 and EEL transcription factors function antagonistically to fine-tune gene expression during late embryogenesis.</title>
        <authorList>
            <person name="Bensmihen S."/>
            <person name="Rippa S."/>
            <person name="Lambert G."/>
            <person name="Jublot D."/>
            <person name="Pautot V."/>
            <person name="Granier F."/>
            <person name="Giraudat J."/>
            <person name="Parcy F."/>
        </authorList>
    </citation>
    <scope>FUNCTION</scope>
    <scope>DEVELOPMENTAL STAGE</scope>
</reference>
<reference key="10">
    <citation type="journal article" date="2002" name="Plant J.">
        <title>Regulation of Arabidopsis thaliana Em genes: role of ABI5.</title>
        <authorList>
            <person name="Carles C."/>
            <person name="Bies-Etheve N."/>
            <person name="Aspart L."/>
            <person name="Leon-Kloosterziel K.M."/>
            <person name="Koornneef M."/>
            <person name="Echeverria M."/>
            <person name="Delseny M."/>
        </authorList>
    </citation>
    <scope>FUNCTION</scope>
    <scope>DNA-BINDING</scope>
</reference>
<reference key="11">
    <citation type="journal article" date="2002" name="Plant J.">
        <title>ABI5 acts downstream of ABI3 to execute an ABA-dependent growth arrest during germination.</title>
        <authorList>
            <person name="Lopez-Molina L."/>
            <person name="Mongrand S."/>
            <person name="McLachlin D.T."/>
            <person name="Chait B.T."/>
            <person name="Chua N.-H."/>
        </authorList>
    </citation>
    <scope>FUNCTION</scope>
    <scope>SUBCELLULAR LOCATION</scope>
    <scope>DNA-BINDING</scope>
    <scope>PHOSPHORYLATION AT SER-42; SER-145 AND THR-201</scope>
    <scope>IDENTIFICATION BY MASS SPECTROMETRY</scope>
</reference>
<reference key="12">
    <citation type="journal article" date="2002" name="Plant Physiol.">
        <title>Regulation and role of the Arabidopsis abscisic acid-insensitive 5 gene in abscisic acid, sugar, and stress response.</title>
        <authorList>
            <person name="Brocard I.M."/>
            <person name="Lynch T.J."/>
            <person name="Finkelstein R.R."/>
        </authorList>
    </citation>
    <scope>FUNCTION</scope>
    <scope>INDUCTION</scope>
</reference>
<reference key="13">
    <citation type="journal article" date="2002" name="Proc. Natl. Acad. Sci. U.S.A.">
        <title>Mitogen-activated protein kinase signaling in postgermination arrest of development by abscisic acid.</title>
        <authorList>
            <person name="Lu C."/>
            <person name="Han M.-H."/>
            <person name="Guevara-Garcia A."/>
            <person name="Fedoroff N.V."/>
        </authorList>
    </citation>
    <scope>FUNCTION</scope>
</reference>
<reference key="14">
    <citation type="journal article" date="2002" name="Trends Plant Sci.">
        <title>bZIP transcription factors in Arabidopsis.</title>
        <authorList>
            <person name="Jakoby M."/>
            <person name="Weisshaar B."/>
            <person name="Droege-Laser W."/>
            <person name="Vicente-Carbajosa J."/>
            <person name="Tiedemann J."/>
            <person name="Kroj T."/>
            <person name="Parcy F."/>
        </authorList>
    </citation>
    <scope>GENE FAMILY</scope>
    <scope>NOMENCLATURE</scope>
</reference>
<reference key="15">
    <citation type="journal article" date="2003" name="Genes Dev.">
        <title>AFP is a novel negative regulator of ABA signaling that promotes ABI5 protein degradation.</title>
        <authorList>
            <person name="Lopez-Molina L."/>
            <person name="Mongrand S."/>
            <person name="Kinoshita N."/>
            <person name="Chua N.-H."/>
        </authorList>
    </citation>
    <scope>PROTEIN DEGRADATION</scope>
    <scope>INTERACTION WITH AFP1</scope>
</reference>
<reference key="16">
    <citation type="journal article" date="2003" name="Plant Cell">
        <title>The pleiotropic role of the 26S proteasome subunit RPN10 in Arabidopsis growth and development supports a substrate-specific function in abscisic acid signaling.</title>
        <authorList>
            <person name="Smalle J."/>
            <person name="Kurepa J."/>
            <person name="Yang P."/>
            <person name="Emborg T.J."/>
            <person name="Babiychuk E."/>
            <person name="Kushnir S."/>
            <person name="Vierstra R.D."/>
        </authorList>
    </citation>
    <scope>PROTEIN DEGRADATION</scope>
</reference>
<reference key="17">
    <citation type="journal article" date="2003" name="Plant Physiol.">
        <title>Three genes that affect sugar sensing (abscisic acid insensitive 4, abscisic acid insensitive 5, and constitutive triple response 1) are differentially regulated by glucose in Arabidopsis.</title>
        <authorList>
            <person name="Arroyo A."/>
            <person name="Bossi F."/>
            <person name="Finkelstein R.R."/>
            <person name="Leon P."/>
        </authorList>
    </citation>
    <scope>INDUCTION</scope>
</reference>
<reference key="18">
    <citation type="journal article" date="2004" name="Planta">
        <title>Interactions of abscisic acid and sugar signalling in the regulation of leaf senescence.</title>
        <authorList>
            <person name="Pourtau N."/>
            <person name="Mares M."/>
            <person name="Purdy S."/>
            <person name="Quentin N."/>
            <person name="Rueel A."/>
            <person name="Wingler A."/>
        </authorList>
    </citation>
    <scope>FUNCTION</scope>
</reference>
<reference key="19">
    <citation type="journal article" date="2005" name="Plant Mol. Biol.">
        <title>Redundant and distinct functions of the ABA response loci ABA-INSENSITIVE(ABI)5 and ABRE-BINDING FACTOR (ABF)3.</title>
        <authorList>
            <person name="Finkelstein R.R."/>
            <person name="Gampala S.S."/>
            <person name="Lynch T.J."/>
            <person name="Thomas T.L."/>
            <person name="Rock C.D."/>
        </authorList>
    </citation>
    <scope>FUNCTION</scope>
    <scope>INTERACTION WITH ABI3</scope>
</reference>
<reference key="20">
    <citation type="journal article" date="2006" name="Plant Cell">
        <title>KEEP ON GOING, a RING E3 ligase essential for Arabidopsis growth and development, is involved in abscisic acid signaling.</title>
        <authorList>
            <person name="Stone S.L."/>
            <person name="Williams L.A."/>
            <person name="Farmer L.M."/>
            <person name="Vierstra R.D."/>
            <person name="Callis J."/>
        </authorList>
    </citation>
    <scope>PROTEIN DEGRADATION</scope>
    <scope>INTERACTION WITH KEG</scope>
</reference>
<reference key="21">
    <citation type="journal article" date="2006" name="Plant Mol. Biol.">
        <title>Transcriptional regulation of ABI3- and ABA-responsive genes including RD29B and RD29A in seeds, germinating embryos, and seedlings of Arabidopsis.</title>
        <authorList>
            <person name="Nakashima K."/>
            <person name="Fujita Y."/>
            <person name="Katsura K."/>
            <person name="Maruyama K."/>
            <person name="Narusaka Y."/>
            <person name="Seki M."/>
            <person name="Shinozaki K."/>
            <person name="Yamaguchi-Shinozaki K."/>
        </authorList>
    </citation>
    <scope>FUNCTION</scope>
    <scope>INDUCTION</scope>
</reference>
<reference key="22">
    <citation type="journal article" date="2007" name="Plant Cell">
        <title>Identification of two protein kinases required for abscisic acid regulation of seed germination, root growth, and gene expression in Arabidopsis.</title>
        <authorList>
            <person name="Fujii H."/>
            <person name="Verslues P.E."/>
            <person name="Zhu J.-K."/>
        </authorList>
    </citation>
    <scope>PHOSPHORYLATION BY SRK2D AND SRK2I</scope>
</reference>
<reference key="23">
    <citation type="journal article" date="2008" name="Plant Mol. Biol.">
        <title>A small plant-specific protein family of ABI five binding proteins (AFPs) regulates stress response in germinating Arabidopsis seeds and seedlings.</title>
        <authorList>
            <person name="Garcia M.E."/>
            <person name="Lynch T.J."/>
            <person name="Peeters J."/>
            <person name="Snowden C."/>
            <person name="Finkelstein R.R."/>
        </authorList>
    </citation>
    <scope>INTERACTION WITH AFP1; AFP2; AFP3 AND AFP4</scope>
</reference>
<reference key="24">
    <citation type="journal article" date="2008" name="Proc. Natl. Acad. Sci. U.S.A.">
        <title>Integration of light and abscisic acid signaling during seed germination and early seedling development.</title>
        <authorList>
            <person name="Chen H."/>
            <person name="Zhang J."/>
            <person name="Neff M.M."/>
            <person name="Hong S.-W."/>
            <person name="Zhang H."/>
            <person name="Deng X.-W."/>
            <person name="Xiong L."/>
        </authorList>
    </citation>
    <scope>INDUCTION</scope>
</reference>
<reference key="25">
    <citation type="journal article" date="2009" name="Proc. Natl. Acad. Sci. U.S.A.">
        <title>Sumoylation of ABI5 by the Arabidopsis SUMO E3 ligase SIZ1 negatively regulates abscisic acid signaling.</title>
        <authorList>
            <person name="Miura K."/>
            <person name="Lee J."/>
            <person name="Jin J.B."/>
            <person name="Yoo C.Y."/>
            <person name="Miura T."/>
            <person name="Hasegawa P.M."/>
        </authorList>
    </citation>
    <scope>SUMOYLATION AT LYS-391</scope>
    <scope>MUTAGENESIS OF LYS-391</scope>
</reference>
<reference key="26">
    <citation type="journal article" date="2012" name="Plant Cell">
        <title>A PP6-type phosphatase holoenzyme directly regulates PIN phosphorylation and auxin efflux in Arabidopsis.</title>
        <authorList>
            <person name="Dai M."/>
            <person name="Zhang C."/>
            <person name="Kania U."/>
            <person name="Chen F."/>
            <person name="Xue Q."/>
            <person name="McCray T."/>
            <person name="Li G."/>
            <person name="Qin G."/>
            <person name="Wakeley M."/>
            <person name="Terzaghi W."/>
            <person name="Wan J."/>
            <person name="Zhao Y."/>
            <person name="Xu J."/>
            <person name="Friml J."/>
            <person name="Deng X.W."/>
            <person name="Wang H."/>
        </authorList>
    </citation>
    <scope>INTERACTION WITH FYPP1 AND FYPP3</scope>
</reference>
<reference key="27">
    <citation type="journal article" date="2012" name="Plant Cell">
        <title>The Arabidopsis mediator subunit MED25 differentially regulates jasmonate and abscisic acid signaling through interacting with the MYC2 and ABI5 transcription factors.</title>
        <authorList>
            <person name="Chen R."/>
            <person name="Jiang H."/>
            <person name="Li L."/>
            <person name="Zhai Q."/>
            <person name="Qi L."/>
            <person name="Zhou W."/>
            <person name="Liu X."/>
            <person name="Li H."/>
            <person name="Zheng W."/>
            <person name="Sun J."/>
            <person name="Li C."/>
        </authorList>
    </citation>
    <scope>INTERACTION WITH MED25</scope>
</reference>
<reference key="28">
    <citation type="journal article" date="2014" name="Plant Physiol.">
        <title>TAP46 plays a positive role in the ABSCISIC ACID INSENSITIVE5-regulated gene expression in Arabidopsis.</title>
        <authorList>
            <person name="Hu R."/>
            <person name="Zhu Y."/>
            <person name="Shen G."/>
            <person name="Zhang H."/>
        </authorList>
    </citation>
    <scope>INTERACTION WITH TAP46 AND PP2A</scope>
</reference>
<reference key="29">
    <citation type="journal article" date="2019" name="Nat. Plants">
        <title>The plant ESCRT component FREE1 shuttles to the nucleus to attenuate abscisic acid signalling.</title>
        <authorList>
            <person name="Li H."/>
            <person name="Li Y."/>
            <person name="Zhao Q."/>
            <person name="Li T."/>
            <person name="Wei J."/>
            <person name="Li B."/>
            <person name="Shen W."/>
            <person name="Yang C."/>
            <person name="Zeng Y."/>
            <person name="Rodriguez P.L."/>
            <person name="Zhao Y."/>
            <person name="Jiang L."/>
            <person name="Wang X."/>
            <person name="Gao C."/>
        </authorList>
    </citation>
    <scope>INTERACTION WITH FREE1</scope>
</reference>
<dbReference type="EMBL" id="AF334206">
    <property type="protein sequence ID" value="AAK19599.1"/>
    <property type="molecule type" value="mRNA"/>
</dbReference>
<dbReference type="EMBL" id="AC006921">
    <property type="protein sequence ID" value="AAD21438.1"/>
    <property type="molecule type" value="Genomic_DNA"/>
</dbReference>
<dbReference type="EMBL" id="CP002685">
    <property type="protein sequence ID" value="AEC09226.1"/>
    <property type="molecule type" value="Genomic_DNA"/>
</dbReference>
<dbReference type="EMBL" id="CP002685">
    <property type="protein sequence ID" value="ANM62587.1"/>
    <property type="molecule type" value="Genomic_DNA"/>
</dbReference>
<dbReference type="EMBL" id="BT026517">
    <property type="protein sequence ID" value="ABH04624.1"/>
    <property type="molecule type" value="mRNA"/>
</dbReference>
<dbReference type="PIR" id="G84778">
    <property type="entry name" value="G84778"/>
</dbReference>
<dbReference type="RefSeq" id="NP_001324735.1">
    <property type="nucleotide sequence ID" value="NM_001336590.1"/>
</dbReference>
<dbReference type="RefSeq" id="NP_565840.1">
    <property type="nucleotide sequence ID" value="NM_129185.4"/>
</dbReference>
<dbReference type="SMR" id="Q9SJN0"/>
<dbReference type="BioGRID" id="3543">
    <property type="interactions" value="84"/>
</dbReference>
<dbReference type="DIP" id="DIP-40551N"/>
<dbReference type="FunCoup" id="Q9SJN0">
    <property type="interactions" value="421"/>
</dbReference>
<dbReference type="IntAct" id="Q9SJN0">
    <property type="interactions" value="29"/>
</dbReference>
<dbReference type="STRING" id="3702.Q9SJN0"/>
<dbReference type="iPTMnet" id="Q9SJN0"/>
<dbReference type="PaxDb" id="3702-AT2G36270.1"/>
<dbReference type="ProteomicsDB" id="244371"/>
<dbReference type="EnsemblPlants" id="AT2G36270.1">
    <property type="protein sequence ID" value="AT2G36270.1"/>
    <property type="gene ID" value="AT2G36270"/>
</dbReference>
<dbReference type="EnsemblPlants" id="AT2G36270.2">
    <property type="protein sequence ID" value="AT2G36270.2"/>
    <property type="gene ID" value="AT2G36270"/>
</dbReference>
<dbReference type="GeneID" id="818199"/>
<dbReference type="Gramene" id="AT2G36270.1">
    <property type="protein sequence ID" value="AT2G36270.1"/>
    <property type="gene ID" value="AT2G36270"/>
</dbReference>
<dbReference type="Gramene" id="AT2G36270.2">
    <property type="protein sequence ID" value="AT2G36270.2"/>
    <property type="gene ID" value="AT2G36270"/>
</dbReference>
<dbReference type="KEGG" id="ath:AT2G36270"/>
<dbReference type="Araport" id="AT2G36270"/>
<dbReference type="TAIR" id="AT2G36270">
    <property type="gene designation" value="ABI5"/>
</dbReference>
<dbReference type="eggNOG" id="ENOG502QPJH">
    <property type="taxonomic scope" value="Eukaryota"/>
</dbReference>
<dbReference type="HOGENOM" id="CLU_043238_1_0_1"/>
<dbReference type="InParanoid" id="Q9SJN0"/>
<dbReference type="OMA" id="WAEINQA"/>
<dbReference type="PhylomeDB" id="Q9SJN0"/>
<dbReference type="PRO" id="PR:Q9SJN0"/>
<dbReference type="Proteomes" id="UP000006548">
    <property type="component" value="Chromosome 2"/>
</dbReference>
<dbReference type="ExpressionAtlas" id="Q9SJN0">
    <property type="expression patterns" value="baseline and differential"/>
</dbReference>
<dbReference type="GO" id="GO:0005634">
    <property type="term" value="C:nucleus"/>
    <property type="evidence" value="ECO:0000314"/>
    <property type="project" value="TAIR"/>
</dbReference>
<dbReference type="GO" id="GO:0003700">
    <property type="term" value="F:DNA-binding transcription factor activity"/>
    <property type="evidence" value="ECO:0000250"/>
    <property type="project" value="TAIR"/>
</dbReference>
<dbReference type="GO" id="GO:0000976">
    <property type="term" value="F:transcription cis-regulatory region binding"/>
    <property type="evidence" value="ECO:0000353"/>
    <property type="project" value="TAIR"/>
</dbReference>
<dbReference type="GO" id="GO:0009738">
    <property type="term" value="P:abscisic acid-activated signaling pathway"/>
    <property type="evidence" value="ECO:0007669"/>
    <property type="project" value="UniProtKB-KW"/>
</dbReference>
<dbReference type="GO" id="GO:0010187">
    <property type="term" value="P:negative regulation of seed germination"/>
    <property type="evidence" value="ECO:0000315"/>
    <property type="project" value="TAIR"/>
</dbReference>
<dbReference type="GO" id="GO:0045893">
    <property type="term" value="P:positive regulation of DNA-templated transcription"/>
    <property type="evidence" value="ECO:0000314"/>
    <property type="project" value="TAIR"/>
</dbReference>
<dbReference type="GO" id="GO:0006355">
    <property type="term" value="P:regulation of DNA-templated transcription"/>
    <property type="evidence" value="ECO:0000315"/>
    <property type="project" value="TAIR"/>
</dbReference>
<dbReference type="GO" id="GO:0009737">
    <property type="term" value="P:response to abscisic acid"/>
    <property type="evidence" value="ECO:0000315"/>
    <property type="project" value="TAIR"/>
</dbReference>
<dbReference type="GO" id="GO:0009739">
    <property type="term" value="P:response to gibberellin"/>
    <property type="evidence" value="ECO:0000270"/>
    <property type="project" value="TAIR"/>
</dbReference>
<dbReference type="GO" id="GO:0009651">
    <property type="term" value="P:response to salt stress"/>
    <property type="evidence" value="ECO:0000270"/>
    <property type="project" value="TAIR"/>
</dbReference>
<dbReference type="GO" id="GO:0009414">
    <property type="term" value="P:response to water deprivation"/>
    <property type="evidence" value="ECO:0000270"/>
    <property type="project" value="TAIR"/>
</dbReference>
<dbReference type="GO" id="GO:0048316">
    <property type="term" value="P:seed development"/>
    <property type="evidence" value="ECO:0000315"/>
    <property type="project" value="TAIR"/>
</dbReference>
<dbReference type="GO" id="GO:0009845">
    <property type="term" value="P:seed germination"/>
    <property type="evidence" value="ECO:0000270"/>
    <property type="project" value="TAIR"/>
</dbReference>
<dbReference type="GO" id="GO:0010182">
    <property type="term" value="P:sugar mediated signaling pathway"/>
    <property type="evidence" value="ECO:0000304"/>
    <property type="project" value="TAIR"/>
</dbReference>
<dbReference type="CDD" id="cd14707">
    <property type="entry name" value="bZIP_plant_BZIP46"/>
    <property type="match status" value="1"/>
</dbReference>
<dbReference type="FunFam" id="1.20.5.170:FF:000060">
    <property type="entry name" value="protein ABSCISIC ACID-INSENSITIVE 5 isoform X1"/>
    <property type="match status" value="1"/>
</dbReference>
<dbReference type="Gene3D" id="1.20.5.170">
    <property type="match status" value="1"/>
</dbReference>
<dbReference type="InterPro" id="IPR004827">
    <property type="entry name" value="bZIP"/>
</dbReference>
<dbReference type="InterPro" id="IPR043452">
    <property type="entry name" value="BZIP46-like"/>
</dbReference>
<dbReference type="InterPro" id="IPR046347">
    <property type="entry name" value="bZIP_sf"/>
</dbReference>
<dbReference type="PANTHER" id="PTHR22952">
    <property type="entry name" value="CAMP-RESPONSE ELEMENT BINDING PROTEIN-RELATED"/>
    <property type="match status" value="1"/>
</dbReference>
<dbReference type="PANTHER" id="PTHR22952:SF175">
    <property type="entry name" value="PROTEIN ABSCISIC ACID-INSENSITIVE 5"/>
    <property type="match status" value="1"/>
</dbReference>
<dbReference type="Pfam" id="PF00170">
    <property type="entry name" value="bZIP_1"/>
    <property type="match status" value="1"/>
</dbReference>
<dbReference type="SMART" id="SM00338">
    <property type="entry name" value="BRLZ"/>
    <property type="match status" value="1"/>
</dbReference>
<dbReference type="SUPFAM" id="SSF57959">
    <property type="entry name" value="Leucine zipper domain"/>
    <property type="match status" value="1"/>
</dbReference>
<dbReference type="PROSITE" id="PS50217">
    <property type="entry name" value="BZIP"/>
    <property type="match status" value="1"/>
</dbReference>
<dbReference type="PROSITE" id="PS00036">
    <property type="entry name" value="BZIP_BASIC"/>
    <property type="match status" value="1"/>
</dbReference>
<name>ABI5_ARATH</name>
<protein>
    <recommendedName>
        <fullName>Protein ABSCISIC ACID-INSENSITIVE 5</fullName>
    </recommendedName>
    <alternativeName>
        <fullName>Dc3 promoter-binding factor 1</fullName>
        <shortName>AtDPBF1</shortName>
    </alternativeName>
    <alternativeName>
        <fullName>Protein GROWTH-INSENSITIVITY TO ABA 1</fullName>
    </alternativeName>
    <alternativeName>
        <fullName>bZIP transcription factor 39</fullName>
        <shortName>AtbZIP39</shortName>
    </alternativeName>
</protein>
<sequence>MVTRETKLTSEREVESSMAQARHNGGGGGENHPFTSLGRQSSIYSLTLDEFQHALCENGKNFGSMNMDEFLVSIWNAEENNNNQQQAAAAAGSHSVPANHNGFNNNNNNGGEGGVGVFSGGSRGNEDANNKRGIANESSLPRQGSLTLPAPLCRKTVDEVWSEIHRGGGSGNGGDSNGRSSSSNGQNNAQNGGETAARQPTFGEMTLEDFLVKAGVVREHPTNPKPNPNPNQNQNPSSVIPAAAQQQLYGVFQGTGDPSFPGQAMGVGDPSGYAKRTGGGGYQQAPPVQAGVCYGGGVGFGAGGQQMGMVGPLSPVSSDGLGHGQVDNIGGQYGVDMGGLRGRKRVVDGPVEKVVERRQRRMIKNRESAARSRARKQAYTVELEAELNQLKEENAQLKHALAELERKRKQQYFESLKSRAQPKLPKSNGRLRTLMRNPSCPL</sequence>